<organism>
    <name type="scientific">Arabidopsis thaliana</name>
    <name type="common">Mouse-ear cress</name>
    <dbReference type="NCBI Taxonomy" id="3702"/>
    <lineage>
        <taxon>Eukaryota</taxon>
        <taxon>Viridiplantae</taxon>
        <taxon>Streptophyta</taxon>
        <taxon>Embryophyta</taxon>
        <taxon>Tracheophyta</taxon>
        <taxon>Spermatophyta</taxon>
        <taxon>Magnoliopsida</taxon>
        <taxon>eudicotyledons</taxon>
        <taxon>Gunneridae</taxon>
        <taxon>Pentapetalae</taxon>
        <taxon>rosids</taxon>
        <taxon>malvids</taxon>
        <taxon>Brassicales</taxon>
        <taxon>Brassicaceae</taxon>
        <taxon>Camelineae</taxon>
        <taxon>Arabidopsis</taxon>
    </lineage>
</organism>
<evidence type="ECO:0000255" key="1"/>
<evidence type="ECO:0000255" key="2">
    <source>
        <dbReference type="PROSITE-ProRule" id="PRU00768"/>
    </source>
</evidence>
<evidence type="ECO:0000256" key="3">
    <source>
        <dbReference type="SAM" id="MobiDB-lite"/>
    </source>
</evidence>
<evidence type="ECO:0000269" key="4">
    <source>
    </source>
</evidence>
<evidence type="ECO:0000303" key="5">
    <source>
    </source>
</evidence>
<evidence type="ECO:0000312" key="6">
    <source>
        <dbReference type="Araport" id="AT4G27430"/>
    </source>
</evidence>
<evidence type="ECO:0000312" key="7">
    <source>
        <dbReference type="EMBL" id="CAB43875.1"/>
    </source>
</evidence>
<evidence type="ECO:0007744" key="8">
    <source>
    </source>
</evidence>
<evidence type="ECO:0007744" key="9">
    <source>
    </source>
</evidence>
<name>CIP7_ARATH</name>
<dbReference type="EMBL" id="AB012912">
    <property type="protein sequence ID" value="BAA31738.1"/>
    <property type="molecule type" value="mRNA"/>
</dbReference>
<dbReference type="EMBL" id="AL078467">
    <property type="protein sequence ID" value="CAB43875.1"/>
    <property type="molecule type" value="Genomic_DNA"/>
</dbReference>
<dbReference type="EMBL" id="AL161571">
    <property type="protein sequence ID" value="CAB81393.1"/>
    <property type="molecule type" value="Genomic_DNA"/>
</dbReference>
<dbReference type="EMBL" id="CP002687">
    <property type="protein sequence ID" value="AEE85339.1"/>
    <property type="molecule type" value="Genomic_DNA"/>
</dbReference>
<dbReference type="EMBL" id="CP002687">
    <property type="protein sequence ID" value="AEE85340.1"/>
    <property type="molecule type" value="Genomic_DNA"/>
</dbReference>
<dbReference type="EMBL" id="AB012913">
    <property type="protein sequence ID" value="BAA31739.1"/>
    <property type="molecule type" value="Genomic_DNA"/>
</dbReference>
<dbReference type="EMBL" id="JX858616">
    <property type="protein sequence ID" value="AFX87054.1"/>
    <property type="molecule type" value="Genomic_DNA"/>
</dbReference>
<dbReference type="EMBL" id="JX858617">
    <property type="protein sequence ID" value="AFX87055.1"/>
    <property type="molecule type" value="Genomic_DNA"/>
</dbReference>
<dbReference type="EMBL" id="JX858618">
    <property type="protein sequence ID" value="AFX87056.1"/>
    <property type="molecule type" value="Genomic_DNA"/>
</dbReference>
<dbReference type="EMBL" id="JX858619">
    <property type="protein sequence ID" value="AFX87057.1"/>
    <property type="molecule type" value="Genomic_DNA"/>
</dbReference>
<dbReference type="EMBL" id="JX858621">
    <property type="protein sequence ID" value="AFX87059.1"/>
    <property type="molecule type" value="Genomic_DNA"/>
</dbReference>
<dbReference type="EMBL" id="JX858622">
    <property type="protein sequence ID" value="AFX87060.1"/>
    <property type="molecule type" value="Genomic_DNA"/>
</dbReference>
<dbReference type="EMBL" id="JX858625">
    <property type="protein sequence ID" value="AFX87063.1"/>
    <property type="molecule type" value="Genomic_DNA"/>
</dbReference>
<dbReference type="EMBL" id="JX858626">
    <property type="protein sequence ID" value="AFX87064.1"/>
    <property type="molecule type" value="Genomic_DNA"/>
</dbReference>
<dbReference type="EMBL" id="JX858627">
    <property type="protein sequence ID" value="AFX87065.1"/>
    <property type="molecule type" value="Genomic_DNA"/>
</dbReference>
<dbReference type="EMBL" id="JX858628">
    <property type="protein sequence ID" value="AFX87066.1"/>
    <property type="molecule type" value="Genomic_DNA"/>
</dbReference>
<dbReference type="EMBL" id="JX858629">
    <property type="protein sequence ID" value="AFX87067.1"/>
    <property type="molecule type" value="Genomic_DNA"/>
</dbReference>
<dbReference type="EMBL" id="JX858630">
    <property type="protein sequence ID" value="AFX87068.1"/>
    <property type="molecule type" value="Genomic_DNA"/>
</dbReference>
<dbReference type="EMBL" id="JX858632">
    <property type="protein sequence ID" value="AFX87069.1"/>
    <property type="molecule type" value="Genomic_DNA"/>
</dbReference>
<dbReference type="EMBL" id="JX858633">
    <property type="protein sequence ID" value="AFX87070.1"/>
    <property type="molecule type" value="Genomic_DNA"/>
</dbReference>
<dbReference type="EMBL" id="JX858634">
    <property type="protein sequence ID" value="AFX87071.1"/>
    <property type="molecule type" value="Genomic_DNA"/>
</dbReference>
<dbReference type="EMBL" id="JX858635">
    <property type="protein sequence ID" value="AFX87072.1"/>
    <property type="molecule type" value="Genomic_DNA"/>
</dbReference>
<dbReference type="EMBL" id="JX858636">
    <property type="protein sequence ID" value="AFX87073.1"/>
    <property type="molecule type" value="Genomic_DNA"/>
</dbReference>
<dbReference type="EMBL" id="AK221927">
    <property type="protein sequence ID" value="BAD94351.1"/>
    <property type="molecule type" value="mRNA"/>
</dbReference>
<dbReference type="PIR" id="T08935">
    <property type="entry name" value="T08935"/>
</dbReference>
<dbReference type="RefSeq" id="NP_001119068.1">
    <property type="nucleotide sequence ID" value="NM_001125596.2"/>
</dbReference>
<dbReference type="RefSeq" id="NP_194473.1">
    <property type="nucleotide sequence ID" value="NM_118877.4"/>
</dbReference>
<dbReference type="FunCoup" id="O80386">
    <property type="interactions" value="419"/>
</dbReference>
<dbReference type="STRING" id="3702.O80386"/>
<dbReference type="iPTMnet" id="O80386"/>
<dbReference type="PaxDb" id="3702-AT4G27430.2"/>
<dbReference type="ProteomicsDB" id="246499"/>
<dbReference type="EnsemblPlants" id="AT4G27430.1">
    <property type="protein sequence ID" value="AT4G27430.1"/>
    <property type="gene ID" value="AT4G27430"/>
</dbReference>
<dbReference type="EnsemblPlants" id="AT4G27430.2">
    <property type="protein sequence ID" value="AT4G27430.2"/>
    <property type="gene ID" value="AT4G27430"/>
</dbReference>
<dbReference type="GeneID" id="828851"/>
<dbReference type="Gramene" id="AT4G27430.1">
    <property type="protein sequence ID" value="AT4G27430.1"/>
    <property type="gene ID" value="AT4G27430"/>
</dbReference>
<dbReference type="Gramene" id="AT4G27430.2">
    <property type="protein sequence ID" value="AT4G27430.2"/>
    <property type="gene ID" value="AT4G27430"/>
</dbReference>
<dbReference type="KEGG" id="ath:AT4G27430"/>
<dbReference type="Araport" id="AT4G27430"/>
<dbReference type="TAIR" id="AT4G27430">
    <property type="gene designation" value="CIP7"/>
</dbReference>
<dbReference type="eggNOG" id="ENOG502QTSA">
    <property type="taxonomic scope" value="Eukaryota"/>
</dbReference>
<dbReference type="HOGENOM" id="CLU_008836_1_0_1"/>
<dbReference type="InParanoid" id="O80386"/>
<dbReference type="OMA" id="MAMPWPN"/>
<dbReference type="PhylomeDB" id="O80386"/>
<dbReference type="PRO" id="PR:O80386"/>
<dbReference type="Proteomes" id="UP000006548">
    <property type="component" value="Chromosome 4"/>
</dbReference>
<dbReference type="ExpressionAtlas" id="O80386">
    <property type="expression patterns" value="baseline and differential"/>
</dbReference>
<dbReference type="GO" id="GO:0005634">
    <property type="term" value="C:nucleus"/>
    <property type="evidence" value="ECO:0000314"/>
    <property type="project" value="TAIR"/>
</dbReference>
<dbReference type="GO" id="GO:0009718">
    <property type="term" value="P:anthocyanin-containing compound biosynthetic process"/>
    <property type="evidence" value="ECO:0000314"/>
    <property type="project" value="TAIR"/>
</dbReference>
<dbReference type="GO" id="GO:0015995">
    <property type="term" value="P:chlorophyll biosynthetic process"/>
    <property type="evidence" value="ECO:0000314"/>
    <property type="project" value="TAIR"/>
</dbReference>
<dbReference type="GO" id="GO:0045893">
    <property type="term" value="P:positive regulation of DNA-templated transcription"/>
    <property type="evidence" value="ECO:0000315"/>
    <property type="project" value="TAIR"/>
</dbReference>
<dbReference type="GO" id="GO:0009416">
    <property type="term" value="P:response to light stimulus"/>
    <property type="evidence" value="ECO:0000315"/>
    <property type="project" value="UniProtKB"/>
</dbReference>
<dbReference type="PANTHER" id="PTHR31008:SF4">
    <property type="entry name" value="COP1-INTERACTING PROTEIN 7"/>
    <property type="match status" value="1"/>
</dbReference>
<dbReference type="PANTHER" id="PTHR31008">
    <property type="entry name" value="COP1-INTERACTING PROTEIN-RELATED"/>
    <property type="match status" value="1"/>
</dbReference>
<feature type="chain" id="PRO_0000441273" description="COP1-interacting protein 7" evidence="1">
    <location>
        <begin position="1"/>
        <end position="1058"/>
    </location>
</feature>
<feature type="region of interest" description="Disordered" evidence="3">
    <location>
        <begin position="123"/>
        <end position="147"/>
    </location>
</feature>
<feature type="region of interest" description="Disordered" evidence="3">
    <location>
        <begin position="262"/>
        <end position="281"/>
    </location>
</feature>
<feature type="region of interest" description="Disordered" evidence="3">
    <location>
        <begin position="330"/>
        <end position="463"/>
    </location>
</feature>
<feature type="region of interest" description="Disordered" evidence="3">
    <location>
        <begin position="708"/>
        <end position="887"/>
    </location>
</feature>
<feature type="region of interest" description="Disordered" evidence="3">
    <location>
        <begin position="1020"/>
        <end position="1041"/>
    </location>
</feature>
<feature type="short sequence motif" description="Nuclear localization signal 1" evidence="2">
    <location>
        <begin position="340"/>
        <end position="347"/>
    </location>
</feature>
<feature type="short sequence motif" description="Nuclear localization signal 2" evidence="2">
    <location>
        <begin position="431"/>
        <end position="438"/>
    </location>
</feature>
<feature type="short sequence motif" description="Nuclear localization signal 3" evidence="2">
    <location>
        <begin position="764"/>
        <end position="771"/>
    </location>
</feature>
<feature type="compositionally biased region" description="Polar residues" evidence="3">
    <location>
        <begin position="126"/>
        <end position="136"/>
    </location>
</feature>
<feature type="compositionally biased region" description="Polar residues" evidence="3">
    <location>
        <begin position="262"/>
        <end position="276"/>
    </location>
</feature>
<feature type="compositionally biased region" description="Basic residues" evidence="3">
    <location>
        <begin position="340"/>
        <end position="353"/>
    </location>
</feature>
<feature type="compositionally biased region" description="Acidic residues" evidence="3">
    <location>
        <begin position="403"/>
        <end position="414"/>
    </location>
</feature>
<feature type="compositionally biased region" description="Basic residues" evidence="3">
    <location>
        <begin position="432"/>
        <end position="446"/>
    </location>
</feature>
<feature type="compositionally biased region" description="Basic and acidic residues" evidence="3">
    <location>
        <begin position="447"/>
        <end position="462"/>
    </location>
</feature>
<feature type="compositionally biased region" description="Basic and acidic residues" evidence="3">
    <location>
        <begin position="757"/>
        <end position="773"/>
    </location>
</feature>
<feature type="compositionally biased region" description="Low complexity" evidence="3">
    <location>
        <begin position="783"/>
        <end position="808"/>
    </location>
</feature>
<feature type="compositionally biased region" description="Basic and acidic residues" evidence="3">
    <location>
        <begin position="860"/>
        <end position="869"/>
    </location>
</feature>
<feature type="compositionally biased region" description="Basic and acidic residues" evidence="3">
    <location>
        <begin position="878"/>
        <end position="887"/>
    </location>
</feature>
<feature type="compositionally biased region" description="Basic and acidic residues" evidence="3">
    <location>
        <begin position="1026"/>
        <end position="1040"/>
    </location>
</feature>
<feature type="modified residue" description="Phosphoserine" evidence="9">
    <location>
        <position position="477"/>
    </location>
</feature>
<feature type="modified residue" description="Phosphoserine" evidence="9">
    <location>
        <position position="915"/>
    </location>
</feature>
<feature type="modified residue" description="Phosphoserine" evidence="8">
    <location>
        <position position="986"/>
    </location>
</feature>
<feature type="modified residue" description="Phosphoserine" evidence="9">
    <location>
        <position position="992"/>
    </location>
</feature>
<proteinExistence type="evidence at protein level"/>
<protein>
    <recommendedName>
        <fullName evidence="5">COP1-interacting protein 7</fullName>
    </recommendedName>
</protein>
<sequence length="1058" mass="118425">MDPRTRLDYALFQLTPTRTRCDLVIFSGGENEKLASGIFQPFVTHLKSVSDQISKGGYSVTLRPSSVGVPWFTKVTLQRFVRFVTTPEVLERSVTLEKEIEQIEDSIQANAAAIAGEAEGNELGGTWTSQKSTALSKTKGETDGDTVEENSKVGLQRVLENRKAALCKEQAMAYARALVVGFELDYMDDLFSFADAFGASRLREACVNFVDLCKRKNEDRMWVDQITAMQAFPRPELTFMGDSGIVLAGEENDLLNATNVKHGNSMDASSQGSFETGQEGRAQMAMPWPNQFPQYMQNFQGHGYPPPYMFPGMQGQSPYFHGNMQWPVNMGDVESNEKSSKKKKKKKKNKKKSKQDESAEPSDNSSTETESEDGNEGKKQSRKVVIRNINYITSKRNGAKESDSDESGEEEGFVDGDSIKQQVEEAIGSVERRHKSTSHRQRKHKSHNGDDDSSNKETKGNDNWDAFQNLLLKDNDSEPEELLRISSTALNMASEVVRKREPPSDDSFLVAIGNEDWGRETSIEKFNAGENVRIIRKGNNYDEEMLNPGRSDESRSYSQAEMSVHDGKLRTRNEAEEDWFIRNQAGPETDPSLVKTFVGDHFHLNKSSERDVLTDDSFMIHSRVENQVEDSRLRTEIMDLDVYGTTQQENSAPENTPHEPDDLYMVLGREQDVKPTLLPWTPEIDFETNTLAQRTSRIDLITATKASAGEQTLDGKEKKSRGISKGKDAKSRASSRPDPASKAKRPAWGSRAAVSKSKSEMEEERKKRMEELLIQRQKRIAEKSSGGSVSSSLASKKTPTVTKSVKSSIKNEKTPEAAQSKAKPVLRSSTIERLAVARTAPKEPQQKPVIKRTSKPSGYKTEKAQEKKSSKIGQSDAKSVELSRDPSLEIKETVVEDSHSYLSEKQVDALPAVASVDDFKDIKELHSLPSEETARVKNRPNEIIAEKVQDQTKIDDQETVKNTSVSEDKQITTKHYSEDVGEVQASQEKPVSPKKSVTFSETNMEEKYYFSPAVSEIDISTPPATEADHSRKKWNSEETSPKATAKVFRKLLMFGRKK</sequence>
<comment type="function">
    <text evidence="4">Exhibits transcriptional activation activity. Positive regulator of light-regulated genes, probably being a direct downstream target of COP1 for mediating light control of gene expression.</text>
</comment>
<comment type="subunit">
    <text evidence="4">Interacts with COP1.</text>
</comment>
<comment type="subcellular location">
    <subcellularLocation>
        <location evidence="2 4">Nucleus</location>
    </subcellularLocation>
</comment>
<comment type="induction">
    <text evidence="4">Triggered by light. Repressed by COP1 in darkness.</text>
</comment>
<comment type="disruption phenotype">
    <text evidence="4">Defects in light-dependent anthocyanin and chlorophyll accumulation, as well as defects in the light control expression of light-inducible genes involved in anthocyanin biosynthesis and photosynthesis.</text>
</comment>
<reference key="1">
    <citation type="journal article" date="1998" name="Plant Cell">
        <title>Role of a COP1 interactive protein in mediating light-regulated gene expression in arabidopsis.</title>
        <authorList>
            <person name="Yamamoto Y.Y."/>
            <person name="Matsui M."/>
            <person name="Ang L.-H."/>
            <person name="Deng X.-W."/>
        </authorList>
    </citation>
    <scope>NUCLEOTIDE SEQUENCE [MRNA]</scope>
    <scope>NUCLEOTIDE SEQUENCE [GENOMIC DNA] OF 1-235</scope>
    <scope>FUNCTION</scope>
    <scope>DISRUPTION PHENOTYPE</scope>
    <scope>SUBCELLULAR LOCATION</scope>
    <scope>INTERACTION WITH COP1</scope>
    <scope>INDUCTION BY LIGHT</scope>
    <source>
        <strain>cv. Columbia</strain>
        <strain>cv. Landsberg erecta</strain>
        <tissue>Etiolated seedling</tissue>
    </source>
</reference>
<reference key="2">
    <citation type="journal article" date="1999" name="Nature">
        <title>Sequence and analysis of chromosome 4 of the plant Arabidopsis thaliana.</title>
        <authorList>
            <person name="Mayer K.F.X."/>
            <person name="Schueller C."/>
            <person name="Wambutt R."/>
            <person name="Murphy G."/>
            <person name="Volckaert G."/>
            <person name="Pohl T."/>
            <person name="Duesterhoeft A."/>
            <person name="Stiekema W."/>
            <person name="Entian K.-D."/>
            <person name="Terryn N."/>
            <person name="Harris B."/>
            <person name="Ansorge W."/>
            <person name="Brandt P."/>
            <person name="Grivell L.A."/>
            <person name="Rieger M."/>
            <person name="Weichselgartner M."/>
            <person name="de Simone V."/>
            <person name="Obermaier B."/>
            <person name="Mache R."/>
            <person name="Mueller M."/>
            <person name="Kreis M."/>
            <person name="Delseny M."/>
            <person name="Puigdomenech P."/>
            <person name="Watson M."/>
            <person name="Schmidtheini T."/>
            <person name="Reichert B."/>
            <person name="Portetelle D."/>
            <person name="Perez-Alonso M."/>
            <person name="Boutry M."/>
            <person name="Bancroft I."/>
            <person name="Vos P."/>
            <person name="Hoheisel J."/>
            <person name="Zimmermann W."/>
            <person name="Wedler H."/>
            <person name="Ridley P."/>
            <person name="Langham S.-A."/>
            <person name="McCullagh B."/>
            <person name="Bilham L."/>
            <person name="Robben J."/>
            <person name="van der Schueren J."/>
            <person name="Grymonprez B."/>
            <person name="Chuang Y.-J."/>
            <person name="Vandenbussche F."/>
            <person name="Braeken M."/>
            <person name="Weltjens I."/>
            <person name="Voet M."/>
            <person name="Bastiaens I."/>
            <person name="Aert R."/>
            <person name="Defoor E."/>
            <person name="Weitzenegger T."/>
            <person name="Bothe G."/>
            <person name="Ramsperger U."/>
            <person name="Hilbert H."/>
            <person name="Braun M."/>
            <person name="Holzer E."/>
            <person name="Brandt A."/>
            <person name="Peters S."/>
            <person name="van Staveren M."/>
            <person name="Dirkse W."/>
            <person name="Mooijman P."/>
            <person name="Klein Lankhorst R."/>
            <person name="Rose M."/>
            <person name="Hauf J."/>
            <person name="Koetter P."/>
            <person name="Berneiser S."/>
            <person name="Hempel S."/>
            <person name="Feldpausch M."/>
            <person name="Lamberth S."/>
            <person name="Van den Daele H."/>
            <person name="De Keyser A."/>
            <person name="Buysshaert C."/>
            <person name="Gielen J."/>
            <person name="Villarroel R."/>
            <person name="De Clercq R."/>
            <person name="van Montagu M."/>
            <person name="Rogers J."/>
            <person name="Cronin A."/>
            <person name="Quail M.A."/>
            <person name="Bray-Allen S."/>
            <person name="Clark L."/>
            <person name="Doggett J."/>
            <person name="Hall S."/>
            <person name="Kay M."/>
            <person name="Lennard N."/>
            <person name="McLay K."/>
            <person name="Mayes R."/>
            <person name="Pettett A."/>
            <person name="Rajandream M.A."/>
            <person name="Lyne M."/>
            <person name="Benes V."/>
            <person name="Rechmann S."/>
            <person name="Borkova D."/>
            <person name="Bloecker H."/>
            <person name="Scharfe M."/>
            <person name="Grimm M."/>
            <person name="Loehnert T.-H."/>
            <person name="Dose S."/>
            <person name="de Haan M."/>
            <person name="Maarse A.C."/>
            <person name="Schaefer M."/>
            <person name="Mueller-Auer S."/>
            <person name="Gabel C."/>
            <person name="Fuchs M."/>
            <person name="Fartmann B."/>
            <person name="Granderath K."/>
            <person name="Dauner D."/>
            <person name="Herzl A."/>
            <person name="Neumann S."/>
            <person name="Argiriou A."/>
            <person name="Vitale D."/>
            <person name="Liguori R."/>
            <person name="Piravandi E."/>
            <person name="Massenet O."/>
            <person name="Quigley F."/>
            <person name="Clabauld G."/>
            <person name="Muendlein A."/>
            <person name="Felber R."/>
            <person name="Schnabl S."/>
            <person name="Hiller R."/>
            <person name="Schmidt W."/>
            <person name="Lecharny A."/>
            <person name="Aubourg S."/>
            <person name="Chefdor F."/>
            <person name="Cooke R."/>
            <person name="Berger C."/>
            <person name="Monfort A."/>
            <person name="Casacuberta E."/>
            <person name="Gibbons T."/>
            <person name="Weber N."/>
            <person name="Vandenbol M."/>
            <person name="Bargues M."/>
            <person name="Terol J."/>
            <person name="Torres A."/>
            <person name="Perez-Perez A."/>
            <person name="Purnelle B."/>
            <person name="Bent E."/>
            <person name="Johnson S."/>
            <person name="Tacon D."/>
            <person name="Jesse T."/>
            <person name="Heijnen L."/>
            <person name="Schwarz S."/>
            <person name="Scholler P."/>
            <person name="Heber S."/>
            <person name="Francs P."/>
            <person name="Bielke C."/>
            <person name="Frishman D."/>
            <person name="Haase D."/>
            <person name="Lemcke K."/>
            <person name="Mewes H.-W."/>
            <person name="Stocker S."/>
            <person name="Zaccaria P."/>
            <person name="Bevan M."/>
            <person name="Wilson R.K."/>
            <person name="de la Bastide M."/>
            <person name="Habermann K."/>
            <person name="Parnell L."/>
            <person name="Dedhia N."/>
            <person name="Gnoj L."/>
            <person name="Schutz K."/>
            <person name="Huang E."/>
            <person name="Spiegel L."/>
            <person name="Sekhon M."/>
            <person name="Murray J."/>
            <person name="Sheet P."/>
            <person name="Cordes M."/>
            <person name="Abu-Threideh J."/>
            <person name="Stoneking T."/>
            <person name="Kalicki J."/>
            <person name="Graves T."/>
            <person name="Harmon G."/>
            <person name="Edwards J."/>
            <person name="Latreille P."/>
            <person name="Courtney L."/>
            <person name="Cloud J."/>
            <person name="Abbott A."/>
            <person name="Scott K."/>
            <person name="Johnson D."/>
            <person name="Minx P."/>
            <person name="Bentley D."/>
            <person name="Fulton B."/>
            <person name="Miller N."/>
            <person name="Greco T."/>
            <person name="Kemp K."/>
            <person name="Kramer J."/>
            <person name="Fulton L."/>
            <person name="Mardis E."/>
            <person name="Dante M."/>
            <person name="Pepin K."/>
            <person name="Hillier L.W."/>
            <person name="Nelson J."/>
            <person name="Spieth J."/>
            <person name="Ryan E."/>
            <person name="Andrews S."/>
            <person name="Geisel C."/>
            <person name="Layman D."/>
            <person name="Du H."/>
            <person name="Ali J."/>
            <person name="Berghoff A."/>
            <person name="Jones K."/>
            <person name="Drone K."/>
            <person name="Cotton M."/>
            <person name="Joshu C."/>
            <person name="Antonoiu B."/>
            <person name="Zidanic M."/>
            <person name="Strong C."/>
            <person name="Sun H."/>
            <person name="Lamar B."/>
            <person name="Yordan C."/>
            <person name="Ma P."/>
            <person name="Zhong J."/>
            <person name="Preston R."/>
            <person name="Vil D."/>
            <person name="Shekher M."/>
            <person name="Matero A."/>
            <person name="Shah R."/>
            <person name="Swaby I.K."/>
            <person name="O'Shaughnessy A."/>
            <person name="Rodriguez M."/>
            <person name="Hoffman J."/>
            <person name="Till S."/>
            <person name="Granat S."/>
            <person name="Shohdy N."/>
            <person name="Hasegawa A."/>
            <person name="Hameed A."/>
            <person name="Lodhi M."/>
            <person name="Johnson A."/>
            <person name="Chen E."/>
            <person name="Marra M.A."/>
            <person name="Martienssen R."/>
            <person name="McCombie W.R."/>
        </authorList>
    </citation>
    <scope>NUCLEOTIDE SEQUENCE [LARGE SCALE GENOMIC DNA]</scope>
    <source>
        <strain>cv. Columbia</strain>
    </source>
</reference>
<reference key="3">
    <citation type="journal article" date="2017" name="Plant J.">
        <title>Araport11: a complete reannotation of the Arabidopsis thaliana reference genome.</title>
        <authorList>
            <person name="Cheng C.Y."/>
            <person name="Krishnakumar V."/>
            <person name="Chan A.P."/>
            <person name="Thibaud-Nissen F."/>
            <person name="Schobel S."/>
            <person name="Town C.D."/>
        </authorList>
    </citation>
    <scope>GENOME REANNOTATION</scope>
    <source>
        <strain>cv. Columbia</strain>
    </source>
</reference>
<reference key="4">
    <citation type="journal article" date="2013" name="PLoS ONE">
        <title>Signatures of demography and recombination at coding genes in naturally-distributed populations of Arabidopsis lyrata subsp. petraea.</title>
        <authorList>
            <person name="Vigueira C.C."/>
            <person name="Rauh B."/>
            <person name="Mitchell-Olds T."/>
            <person name="Lawton-Rauh A.L."/>
        </authorList>
    </citation>
    <scope>NUCLEOTIDE SEQUENCE [GENOMIC DNA] OF 687-915</scope>
    <source>
        <strain>cv. Ak-1</strain>
        <strain>cv. C24</strain>
        <strain>cv. Columbia</strain>
        <strain>cv. Ct-1</strain>
        <strain>cv. Ei-2</strain>
        <strain>cv. Ei-6</strain>
        <strain>cv. Kb-0</strain>
        <strain>cv. Kon</strain>
        <strain>cv. Ler-1</strain>
        <strain>cv. Mt-0</strain>
        <strain>cv. Mz-0</strain>
        <strain>cv. Nd-1</strain>
        <strain>cv. Oy-0</strain>
        <strain>cv. Petergof</strain>
        <strain>cv. Ra-0</strain>
        <strain>cv. Se-0</strain>
        <strain>cv. Yo-0</strain>
    </source>
</reference>
<reference key="5">
    <citation type="submission" date="2005-03" db="EMBL/GenBank/DDBJ databases">
        <title>Large-scale analysis of RIKEN Arabidopsis full-length (RAFL) cDNAs.</title>
        <authorList>
            <person name="Totoki Y."/>
            <person name="Seki M."/>
            <person name="Ishida J."/>
            <person name="Nakajima M."/>
            <person name="Enju A."/>
            <person name="Kamiya A."/>
            <person name="Narusaka M."/>
            <person name="Shin-i T."/>
            <person name="Nakagawa M."/>
            <person name="Sakamoto N."/>
            <person name="Oishi K."/>
            <person name="Kohara Y."/>
            <person name="Kobayashi M."/>
            <person name="Toyoda A."/>
            <person name="Sakaki Y."/>
            <person name="Sakurai T."/>
            <person name="Iida K."/>
            <person name="Akiyama K."/>
            <person name="Satou M."/>
            <person name="Toyoda T."/>
            <person name="Konagaya A."/>
            <person name="Carninci P."/>
            <person name="Kawai J."/>
            <person name="Hayashizaki Y."/>
            <person name="Shinozaki K."/>
        </authorList>
    </citation>
    <scope>NUCLEOTIDE SEQUENCE [LARGE SCALE MRNA] OF 780-1058</scope>
    <source>
        <strain>cv. Columbia</strain>
    </source>
</reference>
<reference key="6">
    <citation type="journal article" date="2009" name="J. Proteomics">
        <title>Phosphoproteomic analysis of nuclei-enriched fractions from Arabidopsis thaliana.</title>
        <authorList>
            <person name="Jones A.M.E."/>
            <person name="MacLean D."/>
            <person name="Studholme D.J."/>
            <person name="Serna-Sanz A."/>
            <person name="Andreasson E."/>
            <person name="Rathjen J.P."/>
            <person name="Peck S.C."/>
        </authorList>
    </citation>
    <scope>PHOSPHORYLATION [LARGE SCALE ANALYSIS] AT SER-986</scope>
    <scope>IDENTIFICATION BY MASS SPECTROMETRY [LARGE SCALE ANALYSIS]</scope>
    <source>
        <strain>cv. Columbia</strain>
    </source>
</reference>
<reference key="7">
    <citation type="journal article" date="2009" name="Plant Physiol.">
        <title>Large-scale Arabidopsis phosphoproteome profiling reveals novel chloroplast kinase substrates and phosphorylation networks.</title>
        <authorList>
            <person name="Reiland S."/>
            <person name="Messerli G."/>
            <person name="Baerenfaller K."/>
            <person name="Gerrits B."/>
            <person name="Endler A."/>
            <person name="Grossmann J."/>
            <person name="Gruissem W."/>
            <person name="Baginsky S."/>
        </authorList>
    </citation>
    <scope>PHOSPHORYLATION [LARGE SCALE ANALYSIS] AT SER-477; SER-915 AND SER-992</scope>
    <scope>IDENTIFICATION BY MASS SPECTROMETRY [LARGE SCALE ANALYSIS]</scope>
</reference>
<keyword id="KW-0010">Activator</keyword>
<keyword id="KW-0539">Nucleus</keyword>
<keyword id="KW-0597">Phosphoprotein</keyword>
<keyword id="KW-1185">Reference proteome</keyword>
<keyword id="KW-0804">Transcription</keyword>
<keyword id="KW-0805">Transcription regulation</keyword>
<gene>
    <name evidence="5" type="primary">CIP7</name>
    <name evidence="6" type="ordered locus">At4g27430</name>
    <name evidence="7" type="ORF">F27G19.30</name>
</gene>
<accession>O80386</accession>
<accession>M9P1T0</accession>
<accession>M9P1T2</accession>
<accession>M9P1T3</accession>
<accession>M9P1T5</accession>
<accession>M9P3Q3</accession>
<accession>M9P3Q9</accession>
<accession>M9P3R1</accession>
<accession>M9P3Z4</accession>
<accession>M9P407</accession>
<accession>M9P412</accession>
<accession>M9P4F1</accession>
<accession>M9P4F6</accession>
<accession>M9P4G1</accession>
<accession>M9P4G6</accession>
<accession>M9P6Z0</accession>
<accession>M9P6Z1</accession>
<accession>M9P6Z2</accession>
<accession>Q56WV4</accession>
<accession>Q7GDB1</accession>